<reference key="1">
    <citation type="journal article" date="1994" name="Yeast">
        <title>The sequence of a 36 kb segment on the left arm of yeast chromosome X identifies 24 open reading frames including NUC1, PRP21 (SPP91), CDC6, CRY2, the gene for S24, a homologue to the aconitase gene ACO1 and two homologues to chromosome III genes.</title>
        <authorList>
            <person name="Purnelle B."/>
            <person name="Coster F."/>
            <person name="Goffeau A."/>
        </authorList>
    </citation>
    <scope>NUCLEOTIDE SEQUENCE [GENOMIC DNA]</scope>
    <source>
        <strain>ATCC 204508 / S288c</strain>
    </source>
</reference>
<reference key="2">
    <citation type="journal article" date="1996" name="EMBO J.">
        <title>Complete nucleotide sequence of Saccharomyces cerevisiae chromosome X.</title>
        <authorList>
            <person name="Galibert F."/>
            <person name="Alexandraki D."/>
            <person name="Baur A."/>
            <person name="Boles E."/>
            <person name="Chalwatzis N."/>
            <person name="Chuat J.-C."/>
            <person name="Coster F."/>
            <person name="Cziepluch C."/>
            <person name="de Haan M."/>
            <person name="Domdey H."/>
            <person name="Durand P."/>
            <person name="Entian K.-D."/>
            <person name="Gatius M."/>
            <person name="Goffeau A."/>
            <person name="Grivell L.A."/>
            <person name="Hennemann A."/>
            <person name="Herbert C.J."/>
            <person name="Heumann K."/>
            <person name="Hilger F."/>
            <person name="Hollenberg C.P."/>
            <person name="Huang M.-E."/>
            <person name="Jacq C."/>
            <person name="Jauniaux J.-C."/>
            <person name="Katsoulou C."/>
            <person name="Kirchrath L."/>
            <person name="Kleine K."/>
            <person name="Kordes E."/>
            <person name="Koetter P."/>
            <person name="Liebl S."/>
            <person name="Louis E.J."/>
            <person name="Manus V."/>
            <person name="Mewes H.-W."/>
            <person name="Miosga T."/>
            <person name="Obermaier B."/>
            <person name="Perea J."/>
            <person name="Pohl T.M."/>
            <person name="Portetelle D."/>
            <person name="Pujol A."/>
            <person name="Purnelle B."/>
            <person name="Ramezani Rad M."/>
            <person name="Rasmussen S.W."/>
            <person name="Rose M."/>
            <person name="Rossau R."/>
            <person name="Schaaff-Gerstenschlaeger I."/>
            <person name="Smits P.H.M."/>
            <person name="Scarcez T."/>
            <person name="Soriano N."/>
            <person name="To Van D."/>
            <person name="Tzermia M."/>
            <person name="Van Broekhoven A."/>
            <person name="Vandenbol M."/>
            <person name="Wedler H."/>
            <person name="von Wettstein D."/>
            <person name="Wambutt R."/>
            <person name="Zagulski M."/>
            <person name="Zollner A."/>
            <person name="Karpfinger-Hartl L."/>
        </authorList>
    </citation>
    <scope>NUCLEOTIDE SEQUENCE [LARGE SCALE GENOMIC DNA]</scope>
    <source>
        <strain>ATCC 204508 / S288c</strain>
    </source>
</reference>
<reference key="3">
    <citation type="journal article" date="2014" name="G3 (Bethesda)">
        <title>The reference genome sequence of Saccharomyces cerevisiae: Then and now.</title>
        <authorList>
            <person name="Engel S.R."/>
            <person name="Dietrich F.S."/>
            <person name="Fisk D.G."/>
            <person name="Binkley G."/>
            <person name="Balakrishnan R."/>
            <person name="Costanzo M.C."/>
            <person name="Dwight S.S."/>
            <person name="Hitz B.C."/>
            <person name="Karra K."/>
            <person name="Nash R.S."/>
            <person name="Weng S."/>
            <person name="Wong E.D."/>
            <person name="Lloyd P."/>
            <person name="Skrzypek M.S."/>
            <person name="Miyasato S.R."/>
            <person name="Simison M."/>
            <person name="Cherry J.M."/>
        </authorList>
    </citation>
    <scope>GENOME REANNOTATION</scope>
    <source>
        <strain>ATCC 204508 / S288c</strain>
    </source>
</reference>
<reference key="4">
    <citation type="journal article" date="2006" name="Proc. Natl. Acad. Sci. U.S.A.">
        <title>A global topology map of the Saccharomyces cerevisiae membrane proteome.</title>
        <authorList>
            <person name="Kim H."/>
            <person name="Melen K."/>
            <person name="Oesterberg M."/>
            <person name="von Heijne G."/>
        </authorList>
    </citation>
    <scope>TOPOLOGY [LARGE SCALE ANALYSIS]</scope>
    <source>
        <strain>ATCC 208353 / W303-1A</strain>
    </source>
</reference>
<reference key="5">
    <citation type="journal article" date="2012" name="Proc. Natl. Acad. Sci. U.S.A.">
        <title>N-terminal acetylome analyses and functional insights of the N-terminal acetyltransferase NatB.</title>
        <authorList>
            <person name="Van Damme P."/>
            <person name="Lasa M."/>
            <person name="Polevoda B."/>
            <person name="Gazquez C."/>
            <person name="Elosegui-Artola A."/>
            <person name="Kim D.S."/>
            <person name="De Juan-Pardo E."/>
            <person name="Demeyer K."/>
            <person name="Hole K."/>
            <person name="Larrea E."/>
            <person name="Timmerman E."/>
            <person name="Prieto J."/>
            <person name="Arnesen T."/>
            <person name="Sherman F."/>
            <person name="Gevaert K."/>
            <person name="Aldabe R."/>
        </authorList>
    </citation>
    <scope>IDENTIFICATION BY MASS SPECTROMETRY [LARGE SCALE ANALYSIS]</scope>
</reference>
<feature type="chain" id="PRO_0000206786" description="Uncharacterized transporter YJL193W">
    <location>
        <begin position="1"/>
        <end position="402"/>
    </location>
</feature>
<feature type="topological domain" description="Cytoplasmic" evidence="1">
    <location>
        <begin position="1"/>
        <end position="12"/>
    </location>
</feature>
<feature type="transmembrane region" description="Helical" evidence="1">
    <location>
        <begin position="13"/>
        <end position="33"/>
    </location>
</feature>
<feature type="topological domain" description="Extracellular" evidence="1">
    <location>
        <begin position="34"/>
        <end position="50"/>
    </location>
</feature>
<feature type="transmembrane region" description="Helical" evidence="1">
    <location>
        <begin position="51"/>
        <end position="71"/>
    </location>
</feature>
<feature type="topological domain" description="Cytoplasmic" evidence="1">
    <location>
        <begin position="72"/>
        <end position="103"/>
    </location>
</feature>
<feature type="transmembrane region" description="Helical" evidence="1">
    <location>
        <begin position="104"/>
        <end position="124"/>
    </location>
</feature>
<feature type="topological domain" description="Extracellular" evidence="1">
    <location>
        <begin position="125"/>
        <end position="134"/>
    </location>
</feature>
<feature type="transmembrane region" description="Helical" evidence="1">
    <location>
        <begin position="135"/>
        <end position="155"/>
    </location>
</feature>
<feature type="topological domain" description="Cytoplasmic" evidence="1">
    <location>
        <begin position="156"/>
        <end position="165"/>
    </location>
</feature>
<feature type="transmembrane region" description="Helical" evidence="1">
    <location>
        <begin position="166"/>
        <end position="186"/>
    </location>
</feature>
<feature type="topological domain" description="Extracellular" evidence="1">
    <location>
        <begin position="187"/>
        <end position="206"/>
    </location>
</feature>
<feature type="transmembrane region" description="Helical" evidence="1">
    <location>
        <begin position="207"/>
        <end position="227"/>
    </location>
</feature>
<feature type="topological domain" description="Cytoplasmic" evidence="1">
    <location>
        <begin position="228"/>
        <end position="271"/>
    </location>
</feature>
<feature type="transmembrane region" description="Helical" evidence="1">
    <location>
        <begin position="272"/>
        <end position="292"/>
    </location>
</feature>
<feature type="topological domain" description="Extracellular" evidence="1">
    <location>
        <begin position="293"/>
        <end position="353"/>
    </location>
</feature>
<feature type="transmembrane region" description="Helical" evidence="1">
    <location>
        <begin position="354"/>
        <end position="374"/>
    </location>
</feature>
<feature type="topological domain" description="Cytoplasmic" evidence="1">
    <location>
        <begin position="375"/>
        <end position="402"/>
    </location>
</feature>
<organism>
    <name type="scientific">Saccharomyces cerevisiae (strain ATCC 204508 / S288c)</name>
    <name type="common">Baker's yeast</name>
    <dbReference type="NCBI Taxonomy" id="559292"/>
    <lineage>
        <taxon>Eukaryota</taxon>
        <taxon>Fungi</taxon>
        <taxon>Dikarya</taxon>
        <taxon>Ascomycota</taxon>
        <taxon>Saccharomycotina</taxon>
        <taxon>Saccharomycetes</taxon>
        <taxon>Saccharomycetales</taxon>
        <taxon>Saccharomycetaceae</taxon>
        <taxon>Saccharomyces</taxon>
    </lineage>
</organism>
<accession>P39542</accession>
<accession>D6VVZ8</accession>
<proteinExistence type="evidence at protein level"/>
<name>YJT3_YEAST</name>
<protein>
    <recommendedName>
        <fullName>Uncharacterized transporter YJL193W</fullName>
    </recommendedName>
</protein>
<keyword id="KW-0472">Membrane</keyword>
<keyword id="KW-1185">Reference proteome</keyword>
<keyword id="KW-0812">Transmembrane</keyword>
<keyword id="KW-1133">Transmembrane helix</keyword>
<keyword id="KW-0813">Transport</keyword>
<sequence length="402" mass="45937">MFQQLSASIRHNAHIIFLCISWYFISSLASQVTKQVLTVCPLPLFLGEFQFIYTAVLAWFTCYIAYSFPGFYRIFPNGTFPEYYIDDRETSRAARKESKLSSLIIPPSKPILQTVLPLGLFQFVGKYFGHTATSLVPVSTVASIKTLSPMFILLLQKILKISTLKITLTLIFSLCTLVLGVWIIVQEDNRSPASSNELREFSKYGVICAMISMFIFVLQNIYGKTVFTYRSQTDESQSNSGFSRQESPLPLYEKLDEKLVAKKKPKSYDKLTLMIYISLVGFCLSFGWFITLEFPVLFRYFFQINSSSTVIKAFPVSLFLLNGTFHFIQAMITFHLLGEVSTLTYSIANLMKRFAIIAVSWVFIGRRITWLQVFGLVLNTLGLFLYERCTSQSKIKAKIRPE</sequence>
<evidence type="ECO:0000255" key="1"/>
<evidence type="ECO:0000305" key="2"/>
<dbReference type="EMBL" id="X77688">
    <property type="protein sequence ID" value="CAA54767.1"/>
    <property type="molecule type" value="Genomic_DNA"/>
</dbReference>
<dbReference type="EMBL" id="Z49468">
    <property type="protein sequence ID" value="CAA89488.1"/>
    <property type="molecule type" value="Genomic_DNA"/>
</dbReference>
<dbReference type="EMBL" id="BK006943">
    <property type="protein sequence ID" value="DAA08614.1"/>
    <property type="molecule type" value="Genomic_DNA"/>
</dbReference>
<dbReference type="PIR" id="S46641">
    <property type="entry name" value="S46641"/>
</dbReference>
<dbReference type="RefSeq" id="NP_012342.1">
    <property type="nucleotide sequence ID" value="NM_001181626.1"/>
</dbReference>
<dbReference type="SMR" id="P39542"/>
<dbReference type="BioGRID" id="33570">
    <property type="interactions" value="58"/>
</dbReference>
<dbReference type="DIP" id="DIP-7379N"/>
<dbReference type="FunCoup" id="P39542">
    <property type="interactions" value="366"/>
</dbReference>
<dbReference type="IntAct" id="P39542">
    <property type="interactions" value="1"/>
</dbReference>
<dbReference type="MINT" id="P39542"/>
<dbReference type="STRING" id="4932.YJL193W"/>
<dbReference type="iPTMnet" id="P39542"/>
<dbReference type="PaxDb" id="4932-YJL193W"/>
<dbReference type="PeptideAtlas" id="P39542"/>
<dbReference type="EnsemblFungi" id="YJL193W_mRNA">
    <property type="protein sequence ID" value="YJL193W"/>
    <property type="gene ID" value="YJL193W"/>
</dbReference>
<dbReference type="GeneID" id="853246"/>
<dbReference type="KEGG" id="sce:YJL193W"/>
<dbReference type="AGR" id="SGD:S000003729"/>
<dbReference type="SGD" id="S000003729">
    <property type="gene designation" value="YJL193W"/>
</dbReference>
<dbReference type="VEuPathDB" id="FungiDB:YJL193W"/>
<dbReference type="eggNOG" id="KOG1441">
    <property type="taxonomic scope" value="Eukaryota"/>
</dbReference>
<dbReference type="GeneTree" id="ENSGT00940000159007"/>
<dbReference type="HOGENOM" id="CLU_019048_4_1_1"/>
<dbReference type="InParanoid" id="P39542"/>
<dbReference type="OMA" id="YDKLTLM"/>
<dbReference type="OrthoDB" id="1588579at2759"/>
<dbReference type="BioCyc" id="YEAST:G3O-31625-MONOMER"/>
<dbReference type="BioGRID-ORCS" id="853246">
    <property type="hits" value="1 hit in 10 CRISPR screens"/>
</dbReference>
<dbReference type="PRO" id="PR:P39542"/>
<dbReference type="Proteomes" id="UP000002311">
    <property type="component" value="Chromosome X"/>
</dbReference>
<dbReference type="RNAct" id="P39542">
    <property type="molecule type" value="protein"/>
</dbReference>
<dbReference type="GO" id="GO:0005783">
    <property type="term" value="C:endoplasmic reticulum"/>
    <property type="evidence" value="ECO:0000318"/>
    <property type="project" value="GO_Central"/>
</dbReference>
<dbReference type="GO" id="GO:0005794">
    <property type="term" value="C:Golgi apparatus"/>
    <property type="evidence" value="ECO:0000318"/>
    <property type="project" value="GO_Central"/>
</dbReference>
<dbReference type="GO" id="GO:0016020">
    <property type="term" value="C:membrane"/>
    <property type="evidence" value="ECO:0007669"/>
    <property type="project" value="UniProtKB-SubCell"/>
</dbReference>
<dbReference type="GO" id="GO:0015297">
    <property type="term" value="F:antiporter activity"/>
    <property type="evidence" value="ECO:0000318"/>
    <property type="project" value="GO_Central"/>
</dbReference>
<dbReference type="GO" id="GO:0089721">
    <property type="term" value="F:phosphoenolpyruvate transmembrane transporter activity"/>
    <property type="evidence" value="ECO:0000318"/>
    <property type="project" value="GO_Central"/>
</dbReference>
<dbReference type="GO" id="GO:1990536">
    <property type="term" value="P:phosphoenolpyruvate transmembrane import into Golgi lumen"/>
    <property type="evidence" value="ECO:0000318"/>
    <property type="project" value="GO_Central"/>
</dbReference>
<dbReference type="InterPro" id="IPR004853">
    <property type="entry name" value="Sugar_P_trans_dom"/>
</dbReference>
<dbReference type="InterPro" id="IPR050186">
    <property type="entry name" value="TPT_transporter"/>
</dbReference>
<dbReference type="PANTHER" id="PTHR11132">
    <property type="entry name" value="SOLUTE CARRIER FAMILY 35"/>
    <property type="match status" value="1"/>
</dbReference>
<dbReference type="Pfam" id="PF03151">
    <property type="entry name" value="TPT"/>
    <property type="match status" value="2"/>
</dbReference>
<comment type="subcellular location">
    <subcellularLocation>
        <location>Membrane</location>
        <topology>Multi-pass membrane protein</topology>
    </subcellularLocation>
</comment>
<comment type="similarity">
    <text evidence="2">Belongs to the TPT transporter family.</text>
</comment>
<gene>
    <name type="ordered locus">YJL193W</name>
    <name type="ORF">J0349</name>
</gene>